<proteinExistence type="evidence at protein level"/>
<organism>
    <name type="scientific">Homo sapiens</name>
    <name type="common">Human</name>
    <dbReference type="NCBI Taxonomy" id="9606"/>
    <lineage>
        <taxon>Eukaryota</taxon>
        <taxon>Metazoa</taxon>
        <taxon>Chordata</taxon>
        <taxon>Craniata</taxon>
        <taxon>Vertebrata</taxon>
        <taxon>Euteleostomi</taxon>
        <taxon>Mammalia</taxon>
        <taxon>Eutheria</taxon>
        <taxon>Euarchontoglires</taxon>
        <taxon>Primates</taxon>
        <taxon>Haplorrhini</taxon>
        <taxon>Catarrhini</taxon>
        <taxon>Hominidae</taxon>
        <taxon>Homo</taxon>
    </lineage>
</organism>
<sequence length="859" mass="97726">MTSKQAMSSNEQERLLCYNGEVLVFQLSKGNFADKEPTKTPILHVRRMVFDRGTKVFVQKSTGFFTIKEENSHLKIMCCNCVSDFRTGINLPYIVIEKNKKNNVFEYFLLILHSTNKFEMRLSFKLGYEMKDGLRVLNGPLILWRHVKAFFFISSQTGKVVSVSGNFSSIQWAGEIENLGMVLLGLKECCLSEEECTQEPSKSDYAIWNTKFCVYSLESQEVLSDIYIIPPAYSSVVTYVHICATEIIKNQLRISLIALTRKNQLISFQNGTPKNVCQLPFGDPCAVQLMDSGGGNLFFVVSFISNNACAVWKESFQVAAKWEKLSLVLIDDFIGSGTEQVLLLFKDSLNSDCLTSFKITDLGKINYSSEPSDCNEDDLFEDKQENRYLVVPPLETGLKVCFSSFRELRQHLLLKEKIISKSYKALINLVQGKDDNTSSAEEKECLVPLCGEEENSVHILDEKLSDNFQDSEQLVEKIWYRVIDDSLVVGVKTTSSLKLSLNDVTLSLLMDQAHDSRFRLLKCQNRVIKLSTNPFPAPYLMPCEIGLEAKRVTLTPDSKKEESFVCEHPSKKECVQIITAVTSLSPLLTFSKFCCTVLLQIMERESGNCPKDRYVVCGRVFLSLEDLSTGKYLLTFPKKKPIEHMEDLFALLAAFHKSCFQITSPGYALNSMKVWLLEHMKCEIIKEFPEVYFCERPGSFYGTLFTWKQRTPFEGILIIYSRNQTVMFQCLHNLIRILPINCFLKNLKSGSENFLIDNMAFTLEKELVTLSSLSSAIAKHESNFMQRCEVSKGKSSVVAAALSDRRENIHPYRKELQREKKKMLQTNLKVSGALYREITLKVAEVQLKSDFAAQKLSNL</sequence>
<accession>Q8NB91</accession>
<accession>B2RMZ4</accession>
<accession>Q7Z2U2</accession>
<accession>Q86XG1</accession>
<gene>
    <name type="primary">FANCB</name>
</gene>
<reference key="1">
    <citation type="journal article" date="2004" name="Nat. Genet.">
        <title>Complete sequencing and characterization of 21,243 full-length human cDNAs.</title>
        <authorList>
            <person name="Ota T."/>
            <person name="Suzuki Y."/>
            <person name="Nishikawa T."/>
            <person name="Otsuki T."/>
            <person name="Sugiyama T."/>
            <person name="Irie R."/>
            <person name="Wakamatsu A."/>
            <person name="Hayashi K."/>
            <person name="Sato H."/>
            <person name="Nagai K."/>
            <person name="Kimura K."/>
            <person name="Makita H."/>
            <person name="Sekine M."/>
            <person name="Obayashi M."/>
            <person name="Nishi T."/>
            <person name="Shibahara T."/>
            <person name="Tanaka T."/>
            <person name="Ishii S."/>
            <person name="Yamamoto J."/>
            <person name="Saito K."/>
            <person name="Kawai Y."/>
            <person name="Isono Y."/>
            <person name="Nakamura Y."/>
            <person name="Nagahari K."/>
            <person name="Murakami K."/>
            <person name="Yasuda T."/>
            <person name="Iwayanagi T."/>
            <person name="Wagatsuma M."/>
            <person name="Shiratori A."/>
            <person name="Sudo H."/>
            <person name="Hosoiri T."/>
            <person name="Kaku Y."/>
            <person name="Kodaira H."/>
            <person name="Kondo H."/>
            <person name="Sugawara M."/>
            <person name="Takahashi M."/>
            <person name="Kanda K."/>
            <person name="Yokoi T."/>
            <person name="Furuya T."/>
            <person name="Kikkawa E."/>
            <person name="Omura Y."/>
            <person name="Abe K."/>
            <person name="Kamihara K."/>
            <person name="Katsuta N."/>
            <person name="Sato K."/>
            <person name="Tanikawa M."/>
            <person name="Yamazaki M."/>
            <person name="Ninomiya K."/>
            <person name="Ishibashi T."/>
            <person name="Yamashita H."/>
            <person name="Murakawa K."/>
            <person name="Fujimori K."/>
            <person name="Tanai H."/>
            <person name="Kimata M."/>
            <person name="Watanabe M."/>
            <person name="Hiraoka S."/>
            <person name="Chiba Y."/>
            <person name="Ishida S."/>
            <person name="Ono Y."/>
            <person name="Takiguchi S."/>
            <person name="Watanabe S."/>
            <person name="Yosida M."/>
            <person name="Hotuta T."/>
            <person name="Kusano J."/>
            <person name="Kanehori K."/>
            <person name="Takahashi-Fujii A."/>
            <person name="Hara H."/>
            <person name="Tanase T.-O."/>
            <person name="Nomura Y."/>
            <person name="Togiya S."/>
            <person name="Komai F."/>
            <person name="Hara R."/>
            <person name="Takeuchi K."/>
            <person name="Arita M."/>
            <person name="Imose N."/>
            <person name="Musashino K."/>
            <person name="Yuuki H."/>
            <person name="Oshima A."/>
            <person name="Sasaki N."/>
            <person name="Aotsuka S."/>
            <person name="Yoshikawa Y."/>
            <person name="Matsunawa H."/>
            <person name="Ichihara T."/>
            <person name="Shiohata N."/>
            <person name="Sano S."/>
            <person name="Moriya S."/>
            <person name="Momiyama H."/>
            <person name="Satoh N."/>
            <person name="Takami S."/>
            <person name="Terashima Y."/>
            <person name="Suzuki O."/>
            <person name="Nakagawa S."/>
            <person name="Senoh A."/>
            <person name="Mizoguchi H."/>
            <person name="Goto Y."/>
            <person name="Shimizu F."/>
            <person name="Wakebe H."/>
            <person name="Hishigaki H."/>
            <person name="Watanabe T."/>
            <person name="Sugiyama A."/>
            <person name="Takemoto M."/>
            <person name="Kawakami B."/>
            <person name="Yamazaki M."/>
            <person name="Watanabe K."/>
            <person name="Kumagai A."/>
            <person name="Itakura S."/>
            <person name="Fukuzumi Y."/>
            <person name="Fujimori Y."/>
            <person name="Komiyama M."/>
            <person name="Tashiro H."/>
            <person name="Tanigami A."/>
            <person name="Fujiwara T."/>
            <person name="Ono T."/>
            <person name="Yamada K."/>
            <person name="Fujii Y."/>
            <person name="Ozaki K."/>
            <person name="Hirao M."/>
            <person name="Ohmori Y."/>
            <person name="Kawabata A."/>
            <person name="Hikiji T."/>
            <person name="Kobatake N."/>
            <person name="Inagaki H."/>
            <person name="Ikema Y."/>
            <person name="Okamoto S."/>
            <person name="Okitani R."/>
            <person name="Kawakami T."/>
            <person name="Noguchi S."/>
            <person name="Itoh T."/>
            <person name="Shigeta K."/>
            <person name="Senba T."/>
            <person name="Matsumura K."/>
            <person name="Nakajima Y."/>
            <person name="Mizuno T."/>
            <person name="Morinaga M."/>
            <person name="Sasaki M."/>
            <person name="Togashi T."/>
            <person name="Oyama M."/>
            <person name="Hata H."/>
            <person name="Watanabe M."/>
            <person name="Komatsu T."/>
            <person name="Mizushima-Sugano J."/>
            <person name="Satoh T."/>
            <person name="Shirai Y."/>
            <person name="Takahashi Y."/>
            <person name="Nakagawa K."/>
            <person name="Okumura K."/>
            <person name="Nagase T."/>
            <person name="Nomura N."/>
            <person name="Kikuchi H."/>
            <person name="Masuho Y."/>
            <person name="Yamashita R."/>
            <person name="Nakai K."/>
            <person name="Yada T."/>
            <person name="Nakamura Y."/>
            <person name="Ohara O."/>
            <person name="Isogai T."/>
            <person name="Sugano S."/>
        </authorList>
    </citation>
    <scope>NUCLEOTIDE SEQUENCE [LARGE SCALE MRNA]</scope>
    <source>
        <tissue>Brain</tissue>
    </source>
</reference>
<reference key="2">
    <citation type="submission" date="2005-07" db="EMBL/GenBank/DDBJ databases">
        <authorList>
            <person name="Mural R.J."/>
            <person name="Istrail S."/>
            <person name="Sutton G.G."/>
            <person name="Florea L."/>
            <person name="Halpern A.L."/>
            <person name="Mobarry C.M."/>
            <person name="Lippert R."/>
            <person name="Walenz B."/>
            <person name="Shatkay H."/>
            <person name="Dew I."/>
            <person name="Miller J.R."/>
            <person name="Flanigan M.J."/>
            <person name="Edwards N.J."/>
            <person name="Bolanos R."/>
            <person name="Fasulo D."/>
            <person name="Halldorsson B.V."/>
            <person name="Hannenhalli S."/>
            <person name="Turner R."/>
            <person name="Yooseph S."/>
            <person name="Lu F."/>
            <person name="Nusskern D.R."/>
            <person name="Shue B.C."/>
            <person name="Zheng X.H."/>
            <person name="Zhong F."/>
            <person name="Delcher A.L."/>
            <person name="Huson D.H."/>
            <person name="Kravitz S.A."/>
            <person name="Mouchard L."/>
            <person name="Reinert K."/>
            <person name="Remington K.A."/>
            <person name="Clark A.G."/>
            <person name="Waterman M.S."/>
            <person name="Eichler E.E."/>
            <person name="Adams M.D."/>
            <person name="Hunkapiller M.W."/>
            <person name="Myers E.W."/>
            <person name="Venter J.C."/>
        </authorList>
    </citation>
    <scope>NUCLEOTIDE SEQUENCE [LARGE SCALE GENOMIC DNA]</scope>
</reference>
<reference key="3">
    <citation type="journal article" date="2004" name="Genome Res.">
        <title>The status, quality, and expansion of the NIH full-length cDNA project: the Mammalian Gene Collection (MGC).</title>
        <authorList>
            <consortium name="The MGC Project Team"/>
        </authorList>
    </citation>
    <scope>NUCLEOTIDE SEQUENCE [LARGE SCALE MRNA]</scope>
    <source>
        <tissue>Testis</tissue>
    </source>
</reference>
<reference key="4">
    <citation type="journal article" date="2004" name="Nat. Genet.">
        <title>X-linked inheritance of Fanconi anemia complementation group B.</title>
        <authorList>
            <person name="Meetei A.R."/>
            <person name="Levitus M."/>
            <person name="Xue Y."/>
            <person name="Medhurst A.L."/>
            <person name="Zwaan M."/>
            <person name="Ling C."/>
            <person name="Rooimans M.A."/>
            <person name="Bier P."/>
            <person name="Hoatlin M."/>
            <person name="Pals G."/>
            <person name="de Winter J.P."/>
            <person name="Wang W."/>
            <person name="Joenje H."/>
        </authorList>
    </citation>
    <scope>IDENTIFICATION BY MASS SPECTROMETRY</scope>
    <scope>IDENTIFICATION IN A COMPLEX WITH FANCA; FANCC; FANCE; FANCF; FANCG AND FANCL</scope>
    <scope>FUNCTION</scope>
    <scope>DISEASE</scope>
    <scope>SUBCELLULAR LOCATION</scope>
</reference>
<reference key="5">
    <citation type="journal article" date="2005" name="Nat. Genet.">
        <title>A human ortholog of archaeal DNA repair protein Hef is defective in Fanconi anemia complementation group M.</title>
        <authorList>
            <person name="Meetei A.R."/>
            <person name="Medhurst A.L."/>
            <person name="Ling C."/>
            <person name="Xue Y."/>
            <person name="Singh T.R."/>
            <person name="Bier P."/>
            <person name="Steltenpool J."/>
            <person name="Stone S."/>
            <person name="Dokal I."/>
            <person name="Mathew C.G."/>
            <person name="Hoatlin M."/>
            <person name="Joenje H."/>
            <person name="de Winter J.P."/>
            <person name="Wang W."/>
        </authorList>
    </citation>
    <scope>IDENTIFICATION IN A COMPLEX WITH FANCA; FANCC; FANCE; FANCF; FANCG; FANCL AND FANCM</scope>
</reference>
<reference key="6">
    <citation type="journal article" date="2006" name="J. Med. Genet.">
        <title>Fanconi anaemia complementation group B presenting as X linked VACTERL with hydrocephalus syndrome.</title>
        <authorList>
            <person name="Holden S.T."/>
            <person name="Cox J.J."/>
            <person name="Kesterton I."/>
            <person name="Thomas N.S."/>
            <person name="Carr C."/>
            <person name="Woods C.G."/>
        </authorList>
    </citation>
    <scope>INVOLVEMENT IN FANCB</scope>
</reference>
<reference key="7">
    <citation type="journal article" date="2012" name="Proc. Natl. Acad. Sci. U.S.A.">
        <title>N-terminal acetylome analyses and functional insights of the N-terminal acetyltransferase NatB.</title>
        <authorList>
            <person name="Van Damme P."/>
            <person name="Lasa M."/>
            <person name="Polevoda B."/>
            <person name="Gazquez C."/>
            <person name="Elosegui-Artola A."/>
            <person name="Kim D.S."/>
            <person name="De Juan-Pardo E."/>
            <person name="Demeyer K."/>
            <person name="Hole K."/>
            <person name="Larrea E."/>
            <person name="Timmerman E."/>
            <person name="Prieto J."/>
            <person name="Arnesen T."/>
            <person name="Sherman F."/>
            <person name="Gevaert K."/>
            <person name="Aldabe R."/>
        </authorList>
    </citation>
    <scope>ACETYLATION [LARGE SCALE ANALYSIS] AT THR-2</scope>
    <scope>CLEAVAGE OF INITIATOR METHIONINE [LARGE SCALE ANALYSIS]</scope>
    <scope>IDENTIFICATION BY MASS SPECTROMETRY [LARGE SCALE ANALYSIS]</scope>
</reference>
<reference key="8">
    <citation type="journal article" date="2012" name="N. Engl. J. Med.">
        <title>Diagnostic exome sequencing in persons with severe intellectual disability.</title>
        <authorList>
            <person name="de Ligt J."/>
            <person name="Willemsen M.H."/>
            <person name="van Bon B.W."/>
            <person name="Kleefstra T."/>
            <person name="Yntema H.G."/>
            <person name="Kroes T."/>
            <person name="Vulto-van Silfhout A.T."/>
            <person name="Koolen D.A."/>
            <person name="de Vries P."/>
            <person name="Gilissen C."/>
            <person name="del Rosario M."/>
            <person name="Hoischen A."/>
            <person name="Scheffer H."/>
            <person name="de Vries B.B."/>
            <person name="Brunner H.G."/>
            <person name="Veltman J.A."/>
            <person name="Vissers L.E."/>
        </authorList>
    </citation>
    <scope>VARIANT THR-330</scope>
</reference>
<evidence type="ECO:0000269" key="1">
    <source>
    </source>
</evidence>
<evidence type="ECO:0000269" key="2">
    <source>
    </source>
</evidence>
<evidence type="ECO:0000269" key="3">
    <source>
    </source>
</evidence>
<evidence type="ECO:0000269" key="4">
    <source>
    </source>
</evidence>
<evidence type="ECO:0000305" key="5"/>
<evidence type="ECO:0007744" key="6">
    <source>
    </source>
</evidence>
<name>FANCB_HUMAN</name>
<protein>
    <recommendedName>
        <fullName>Fanconi anemia group B protein</fullName>
        <shortName>Protein FACB</shortName>
    </recommendedName>
    <alternativeName>
        <fullName>Fanconi anemia-associated polypeptide of 95 kDa</fullName>
        <shortName>FAAP95</shortName>
    </alternativeName>
</protein>
<comment type="function">
    <text evidence="1">DNA repair protein required for FANCD2 ubiquitination.</text>
</comment>
<comment type="subunit">
    <text evidence="1 2">Belongs to the multisubunit FA complex composed of FANCA, FANCB, FANCC, FANCE, FANCF, FANCG, FANCL/PHF9 and FANCM. The complex is not found in FA patients.</text>
</comment>
<comment type="interaction">
    <interactant intactId="EBI-2557983">
        <id>Q8NB91</id>
    </interactant>
    <interactant intactId="EBI-2557990">
        <id>Q0VG06</id>
        <label>FAAP100</label>
    </interactant>
    <organismsDiffer>false</organismsDiffer>
    <experiments>4</experiments>
</comment>
<comment type="subcellular location">
    <subcellularLocation>
        <location evidence="1">Nucleus</location>
    </subcellularLocation>
</comment>
<comment type="disease" evidence="3">
    <disease id="DI-01600">
        <name>Fanconi anemia complementation group B</name>
        <acronym>FANCB</acronym>
        <description>A disorder affecting all bone marrow elements and resulting in anemia, leukopenia and thrombopenia. It is associated with cardiac, renal and limb malformations, dermal pigmentary changes, and a predisposition to the development of malignancies. At the cellular level it is associated with hypersensitivity to DNA-damaging agents, chromosomal instability (increased chromosome breakage) and defective DNA repair. Some severe FANCB cases manifest features of VACTERL syndrome with hydrocephalus.</description>
        <dbReference type="MIM" id="300514"/>
    </disease>
    <text>The disease is caused by variants affecting the gene represented in this entry.</text>
</comment>
<comment type="sequence caution" evidence="5">
    <conflict type="miscellaneous discrepancy">
        <sequence resource="EMBL-CDS" id="AAH43596"/>
    </conflict>
    <text>Contaminating sequence. Potential poly-A sequence.</text>
</comment>
<comment type="sequence caution" evidence="5">
    <conflict type="miscellaneous discrepancy">
        <sequence resource="EMBL-CDS" id="AAH55411"/>
    </conflict>
    <text>Contaminating sequence. Potential poly-A sequence.</text>
</comment>
<comment type="online information" name="Fanconi Anemia Mutation Database">
    <link uri="https://www2.rockefeller.edu/fanconi/genes/jumpb"/>
</comment>
<keyword id="KW-0002">3D-structure</keyword>
<keyword id="KW-0007">Acetylation</keyword>
<keyword id="KW-0227">DNA damage</keyword>
<keyword id="KW-0234">DNA repair</keyword>
<keyword id="KW-0923">Fanconi anemia</keyword>
<keyword id="KW-0539">Nucleus</keyword>
<keyword id="KW-1267">Proteomics identification</keyword>
<keyword id="KW-1185">Reference proteome</keyword>
<feature type="initiator methionine" description="Removed" evidence="6">
    <location>
        <position position="1"/>
    </location>
</feature>
<feature type="chain" id="PRO_0000087181" description="Fanconi anemia group B protein">
    <location>
        <begin position="2"/>
        <end position="859"/>
    </location>
</feature>
<feature type="modified residue" description="N-acetylthreonine" evidence="6">
    <location>
        <position position="2"/>
    </location>
</feature>
<feature type="sequence variant" id="VAR_069426" description="In dbSNP:rs200161949." evidence="4">
    <original>I</original>
    <variation>T</variation>
    <location>
        <position position="330"/>
    </location>
</feature>
<dbReference type="EMBL" id="AK091383">
    <property type="protein sequence ID" value="BAC03650.1"/>
    <property type="molecule type" value="mRNA"/>
</dbReference>
<dbReference type="EMBL" id="CH471074">
    <property type="protein sequence ID" value="EAW98861.1"/>
    <property type="molecule type" value="Genomic_DNA"/>
</dbReference>
<dbReference type="EMBL" id="BC043596">
    <property type="protein sequence ID" value="AAH43596.1"/>
    <property type="status" value="ALT_SEQ"/>
    <property type="molecule type" value="mRNA"/>
</dbReference>
<dbReference type="EMBL" id="BC055411">
    <property type="protein sequence ID" value="AAH55411.1"/>
    <property type="status" value="ALT_SEQ"/>
    <property type="molecule type" value="mRNA"/>
</dbReference>
<dbReference type="EMBL" id="BC136558">
    <property type="protein sequence ID" value="AAI36559.1"/>
    <property type="molecule type" value="mRNA"/>
</dbReference>
<dbReference type="EMBL" id="BC136560">
    <property type="protein sequence ID" value="AAI36561.1"/>
    <property type="molecule type" value="mRNA"/>
</dbReference>
<dbReference type="CCDS" id="CCDS14161.1"/>
<dbReference type="RefSeq" id="NP_001018123.1">
    <property type="nucleotide sequence ID" value="NM_001018113.3"/>
</dbReference>
<dbReference type="RefSeq" id="NP_001311091.1">
    <property type="nucleotide sequence ID" value="NM_001324162.2"/>
</dbReference>
<dbReference type="RefSeq" id="NP_689846.1">
    <property type="nucleotide sequence ID" value="NM_152633.4"/>
</dbReference>
<dbReference type="RefSeq" id="XP_016884844.1">
    <property type="nucleotide sequence ID" value="XM_017029355.1"/>
</dbReference>
<dbReference type="RefSeq" id="XP_047297876.1">
    <property type="nucleotide sequence ID" value="XM_047441920.1"/>
</dbReference>
<dbReference type="RefSeq" id="XP_047297877.1">
    <property type="nucleotide sequence ID" value="XM_047441921.1"/>
</dbReference>
<dbReference type="RefSeq" id="XP_054182665.1">
    <property type="nucleotide sequence ID" value="XM_054326690.1"/>
</dbReference>
<dbReference type="RefSeq" id="XP_054182666.1">
    <property type="nucleotide sequence ID" value="XM_054326691.1"/>
</dbReference>
<dbReference type="PDB" id="7KZP">
    <property type="method" value="EM"/>
    <property type="resolution" value="3.10 A"/>
    <property type="chains" value="B/O=1-859"/>
</dbReference>
<dbReference type="PDB" id="7KZQ">
    <property type="method" value="EM"/>
    <property type="resolution" value="4.20 A"/>
    <property type="chains" value="B/O=1-859"/>
</dbReference>
<dbReference type="PDB" id="7KZR">
    <property type="method" value="EM"/>
    <property type="resolution" value="4.20 A"/>
    <property type="chains" value="B/O=1-859"/>
</dbReference>
<dbReference type="PDB" id="7KZS">
    <property type="method" value="EM"/>
    <property type="resolution" value="4.20 A"/>
    <property type="chains" value="B/O=1-859"/>
</dbReference>
<dbReference type="PDB" id="7KZT">
    <property type="method" value="EM"/>
    <property type="resolution" value="4.20 A"/>
    <property type="chains" value="B/O=1-859"/>
</dbReference>
<dbReference type="PDB" id="7KZV">
    <property type="method" value="EM"/>
    <property type="resolution" value="4.20 A"/>
    <property type="chains" value="B/O=1-859"/>
</dbReference>
<dbReference type="PDBsum" id="7KZP"/>
<dbReference type="PDBsum" id="7KZQ"/>
<dbReference type="PDBsum" id="7KZR"/>
<dbReference type="PDBsum" id="7KZS"/>
<dbReference type="PDBsum" id="7KZT"/>
<dbReference type="PDBsum" id="7KZV"/>
<dbReference type="EMDB" id="EMD-23085"/>
<dbReference type="EMDB" id="EMD-23086"/>
<dbReference type="EMDB" id="EMD-23087"/>
<dbReference type="EMDB" id="EMD-23088"/>
<dbReference type="EMDB" id="EMD-23089"/>
<dbReference type="EMDB" id="EMD-23090"/>
<dbReference type="SMR" id="Q8NB91"/>
<dbReference type="BioGRID" id="108482">
    <property type="interactions" value="28"/>
</dbReference>
<dbReference type="ComplexPortal" id="CPX-6263">
    <property type="entry name" value="Fanconi anemia ubiquitin ligase complex"/>
</dbReference>
<dbReference type="CORUM" id="Q8NB91"/>
<dbReference type="FunCoup" id="Q8NB91">
    <property type="interactions" value="1159"/>
</dbReference>
<dbReference type="IntAct" id="Q8NB91">
    <property type="interactions" value="21"/>
</dbReference>
<dbReference type="MINT" id="Q8NB91"/>
<dbReference type="STRING" id="9606.ENSP00000498215"/>
<dbReference type="GlyGen" id="Q8NB91">
    <property type="glycosylation" value="6 sites, 1 O-linked glycan (3 sites)"/>
</dbReference>
<dbReference type="iPTMnet" id="Q8NB91"/>
<dbReference type="PhosphoSitePlus" id="Q8NB91"/>
<dbReference type="BioMuta" id="FANCB"/>
<dbReference type="DMDM" id="74751163"/>
<dbReference type="jPOST" id="Q8NB91"/>
<dbReference type="MassIVE" id="Q8NB91"/>
<dbReference type="PaxDb" id="9606-ENSP00000381378"/>
<dbReference type="PeptideAtlas" id="Q8NB91"/>
<dbReference type="ProteomicsDB" id="72752"/>
<dbReference type="Pumba" id="Q8NB91"/>
<dbReference type="Antibodypedia" id="553">
    <property type="antibodies" value="153 antibodies from 19 providers"/>
</dbReference>
<dbReference type="DNASU" id="2187"/>
<dbReference type="Ensembl" id="ENST00000324138.7">
    <property type="protein sequence ID" value="ENSP00000326819.3"/>
    <property type="gene ID" value="ENSG00000181544.16"/>
</dbReference>
<dbReference type="Ensembl" id="ENST00000650831.1">
    <property type="protein sequence ID" value="ENSP00000498215.1"/>
    <property type="gene ID" value="ENSG00000181544.16"/>
</dbReference>
<dbReference type="Ensembl" id="ENST00000696312.1">
    <property type="protein sequence ID" value="ENSP00000512550.1"/>
    <property type="gene ID" value="ENSG00000181544.16"/>
</dbReference>
<dbReference type="Ensembl" id="ENST00000696356.1">
    <property type="protein sequence ID" value="ENSP00000512577.1"/>
    <property type="gene ID" value="ENSG00000181544.16"/>
</dbReference>
<dbReference type="Ensembl" id="ENST00000696357.1">
    <property type="protein sequence ID" value="ENSP00000512578.1"/>
    <property type="gene ID" value="ENSG00000181544.16"/>
</dbReference>
<dbReference type="GeneID" id="2187"/>
<dbReference type="KEGG" id="hsa:2187"/>
<dbReference type="MANE-Select" id="ENST00000650831.1">
    <property type="protein sequence ID" value="ENSP00000498215.1"/>
    <property type="RefSeq nucleotide sequence ID" value="NM_001018113.3"/>
    <property type="RefSeq protein sequence ID" value="NP_001018123.1"/>
</dbReference>
<dbReference type="UCSC" id="uc004cwg.1">
    <property type="organism name" value="human"/>
</dbReference>
<dbReference type="AGR" id="HGNC:3583"/>
<dbReference type="CTD" id="2187"/>
<dbReference type="DisGeNET" id="2187"/>
<dbReference type="GeneCards" id="FANCB"/>
<dbReference type="GeneReviews" id="FANCB"/>
<dbReference type="HGNC" id="HGNC:3583">
    <property type="gene designation" value="FANCB"/>
</dbReference>
<dbReference type="HPA" id="ENSG00000181544">
    <property type="expression patterns" value="Tissue enhanced (bone marrow, lymphoid tissue)"/>
</dbReference>
<dbReference type="MalaCards" id="FANCB"/>
<dbReference type="MIM" id="300514">
    <property type="type" value="phenotype"/>
</dbReference>
<dbReference type="MIM" id="300515">
    <property type="type" value="gene"/>
</dbReference>
<dbReference type="neXtProt" id="NX_Q8NB91"/>
<dbReference type="OpenTargets" id="ENSG00000181544"/>
<dbReference type="Orphanet" id="84">
    <property type="disease" value="Fanconi anemia"/>
</dbReference>
<dbReference type="Orphanet" id="3412">
    <property type="disease" value="VACTERL with hydrocephalus"/>
</dbReference>
<dbReference type="PharmGKB" id="PA27996"/>
<dbReference type="VEuPathDB" id="HostDB:ENSG00000181544"/>
<dbReference type="eggNOG" id="ENOG502QWED">
    <property type="taxonomic scope" value="Eukaryota"/>
</dbReference>
<dbReference type="GeneTree" id="ENSGT00390000009885"/>
<dbReference type="InParanoid" id="Q8NB91"/>
<dbReference type="OMA" id="LAFHRVC"/>
<dbReference type="OrthoDB" id="1917888at2759"/>
<dbReference type="PAN-GO" id="Q8NB91">
    <property type="GO annotations" value="4 GO annotations based on evolutionary models"/>
</dbReference>
<dbReference type="PhylomeDB" id="Q8NB91"/>
<dbReference type="TreeFam" id="TF331239"/>
<dbReference type="PathwayCommons" id="Q8NB91"/>
<dbReference type="Reactome" id="R-HSA-6783310">
    <property type="pathway name" value="Fanconi Anemia Pathway"/>
</dbReference>
<dbReference type="Reactome" id="R-HSA-9833482">
    <property type="pathway name" value="PKR-mediated signaling"/>
</dbReference>
<dbReference type="SignaLink" id="Q8NB91"/>
<dbReference type="SIGNOR" id="Q8NB91"/>
<dbReference type="BioGRID-ORCS" id="2187">
    <property type="hits" value="37 hits in 785 CRISPR screens"/>
</dbReference>
<dbReference type="ChiTaRS" id="FANCB">
    <property type="organism name" value="human"/>
</dbReference>
<dbReference type="GeneWiki" id="FANCB"/>
<dbReference type="GenomeRNAi" id="2187"/>
<dbReference type="Pharos" id="Q8NB91">
    <property type="development level" value="Tbio"/>
</dbReference>
<dbReference type="PRO" id="PR:Q8NB91"/>
<dbReference type="Proteomes" id="UP000005640">
    <property type="component" value="Chromosome X"/>
</dbReference>
<dbReference type="RNAct" id="Q8NB91">
    <property type="molecule type" value="protein"/>
</dbReference>
<dbReference type="Bgee" id="ENSG00000181544">
    <property type="expression patterns" value="Expressed in male germ line stem cell (sensu Vertebrata) in testis and 100 other cell types or tissues"/>
</dbReference>
<dbReference type="ExpressionAtlas" id="Q8NB91">
    <property type="expression patterns" value="baseline and differential"/>
</dbReference>
<dbReference type="GO" id="GO:0000785">
    <property type="term" value="C:chromatin"/>
    <property type="evidence" value="ECO:0000314"/>
    <property type="project" value="ComplexPortal"/>
</dbReference>
<dbReference type="GO" id="GO:0005829">
    <property type="term" value="C:cytosol"/>
    <property type="evidence" value="ECO:0000304"/>
    <property type="project" value="Reactome"/>
</dbReference>
<dbReference type="GO" id="GO:0043240">
    <property type="term" value="C:Fanconi anaemia nuclear complex"/>
    <property type="evidence" value="ECO:0000314"/>
    <property type="project" value="UniProtKB"/>
</dbReference>
<dbReference type="GO" id="GO:0005654">
    <property type="term" value="C:nucleoplasm"/>
    <property type="evidence" value="ECO:0000304"/>
    <property type="project" value="Reactome"/>
</dbReference>
<dbReference type="GO" id="GO:0036297">
    <property type="term" value="P:interstrand cross-link repair"/>
    <property type="evidence" value="ECO:0000303"/>
    <property type="project" value="ComplexPortal"/>
</dbReference>
<dbReference type="GO" id="GO:2000042">
    <property type="term" value="P:negative regulation of double-strand break repair via homologous recombination"/>
    <property type="evidence" value="ECO:0000318"/>
    <property type="project" value="GO_Central"/>
</dbReference>
<dbReference type="GO" id="GO:1905168">
    <property type="term" value="P:positive regulation of double-strand break repair via homologous recombination"/>
    <property type="evidence" value="ECO:0000318"/>
    <property type="project" value="GO_Central"/>
</dbReference>
<dbReference type="GO" id="GO:1990414">
    <property type="term" value="P:replication-born double-strand break repair via sister chromatid exchange"/>
    <property type="evidence" value="ECO:0000318"/>
    <property type="project" value="GO_Central"/>
</dbReference>
<dbReference type="InterPro" id="IPR033333">
    <property type="entry name" value="FANCB"/>
</dbReference>
<dbReference type="PANTHER" id="PTHR28450">
    <property type="entry name" value="FANCONI ANEMIA GROUP B PROTEIN"/>
    <property type="match status" value="1"/>
</dbReference>
<dbReference type="PANTHER" id="PTHR28450:SF1">
    <property type="entry name" value="FANCONI ANEMIA GROUP B PROTEIN"/>
    <property type="match status" value="1"/>
</dbReference>